<accession>Q5PXE9</accession>
<keyword id="KW-0067">ATP-binding</keyword>
<keyword id="KW-0963">Cytoplasm</keyword>
<keyword id="KW-0418">Kinase</keyword>
<keyword id="KW-0547">Nucleotide-binding</keyword>
<keyword id="KW-0539">Nucleus</keyword>
<keyword id="KW-1185">Reference proteome</keyword>
<keyword id="KW-0808">Transferase</keyword>
<comment type="function">
    <text evidence="1">Phosphorylates Ins(1,3,4,5,6)P5 at position 2 to form Ins(1,2,3,4,5,6)P6 (InsP6 or phytate). InsP6 is involved in many processes such as mRNA export, non-homologous end-joining, endocytosis, ion channel regulation. It also protects cells from TNF-alpha-induced apoptosis.</text>
</comment>
<comment type="catalytic activity">
    <reaction evidence="1">
        <text>1D-myo-inositol 1,3,4,5,6-pentakisphosphate + ATP = 1D-myo-inositol hexakisphosphate + ADP + H(+)</text>
        <dbReference type="Rhea" id="RHEA:20313"/>
        <dbReference type="ChEBI" id="CHEBI:15378"/>
        <dbReference type="ChEBI" id="CHEBI:30616"/>
        <dbReference type="ChEBI" id="CHEBI:57733"/>
        <dbReference type="ChEBI" id="CHEBI:58130"/>
        <dbReference type="ChEBI" id="CHEBI:456216"/>
        <dbReference type="EC" id="2.7.1.158"/>
    </reaction>
</comment>
<comment type="subcellular location">
    <subcellularLocation>
        <location evidence="3">Cytoplasm</location>
    </subcellularLocation>
    <subcellularLocation>
        <location evidence="3">Nucleus</location>
    </subcellularLocation>
</comment>
<comment type="domain">
    <text>The EXKPK motif is conserved in inositol-pentakisphosphate 2-kinases of both family 1 and 2.</text>
</comment>
<comment type="similarity">
    <text evidence="2">Belongs to the IPK1 type 2 family.</text>
</comment>
<protein>
    <recommendedName>
        <fullName>Inositol-pentakisphosphate 2-kinase</fullName>
        <ecNumber>2.7.1.158</ecNumber>
    </recommendedName>
    <alternativeName>
        <fullName>Inositol-1,3,4,5,6-pentakisphosphate 2-kinase</fullName>
    </alternativeName>
    <alternativeName>
        <fullName>Ins(1,3,4,5,6)P5 2-kinase</fullName>
        <shortName>InsP5 2-kinase</shortName>
        <shortName>rIPK1</shortName>
    </alternativeName>
</protein>
<name>IPPK_RAT</name>
<sequence length="489" mass="55634">MEEGKMDENEWSYHGEGNKSLVVAHAQRCVVLRFLKFPPNKKKTSEEILQHLQNIVDFGKNVMKDFLGENYVHCGEVVQLPLEFVKQLCLKIQCERPESRCDKDLDTLSGYAMCLPNLTRLQTFPFAEHRPILCVEIKPKCGFIPFSNGVTHEMKHKVCRYCMHQHLKVATGKWKKISKYCPLDLYSGNKQRMHFALKSLLQEAQNNLRIFKNGELIYGCADARSPVADLKALAHHLKPFFFPSNGLASGPQCTRAVIRELVHVITRVLLSTSDKGRAGALRLGLQGARVCEASPFSRSLHHQGKNTPEHSGLPKGCLLYKTLQVQMLDQLDIEGLYPLYNRVEQYLEEFPEERKTLQIDGPYDEVFYQKLLDLSTEDDGTVAFALTKVQQYRVAMTAKDCSIMIALSPCLQGASSDQRPVIPSSRSRLAFSVSVLDLDLKPYESIPHQYKLDSKIVSYYSKTVHAKDDTVRSTRFKEHEDCTLVLHKV</sequence>
<feature type="chain" id="PRO_0000110531" description="Inositol-pentakisphosphate 2-kinase">
    <location>
        <begin position="1"/>
        <end position="489"/>
    </location>
</feature>
<feature type="short sequence motif" description="EXKPK motif">
    <location>
        <begin position="136"/>
        <end position="140"/>
    </location>
</feature>
<gene>
    <name type="primary">Ippk</name>
</gene>
<reference key="1">
    <citation type="journal article" date="2005" name="J. Biol. Chem.">
        <title>A role for rat inositol polyphosphate kinases, rIpk2 and rIpk1, in inositol pentakisphosphate and inositol hexakisphosphate production in Rat-1 cells.</title>
        <authorList>
            <person name="Fujii M."/>
            <person name="York J.D."/>
        </authorList>
    </citation>
    <scope>NUCLEOTIDE SEQUENCE [MRNA]</scope>
    <scope>FUNCTION</scope>
    <scope>CATALYTIC ACTIVITY</scope>
    <scope>SUBCELLULAR LOCATION</scope>
</reference>
<proteinExistence type="evidence at protein level"/>
<evidence type="ECO:0000269" key="1">
    <source>
    </source>
</evidence>
<evidence type="ECO:0000305" key="2"/>
<evidence type="ECO:0000305" key="3">
    <source>
    </source>
</evidence>
<organism>
    <name type="scientific">Rattus norvegicus</name>
    <name type="common">Rat</name>
    <dbReference type="NCBI Taxonomy" id="10116"/>
    <lineage>
        <taxon>Eukaryota</taxon>
        <taxon>Metazoa</taxon>
        <taxon>Chordata</taxon>
        <taxon>Craniata</taxon>
        <taxon>Vertebrata</taxon>
        <taxon>Euteleostomi</taxon>
        <taxon>Mammalia</taxon>
        <taxon>Eutheria</taxon>
        <taxon>Euarchontoglires</taxon>
        <taxon>Glires</taxon>
        <taxon>Rodentia</taxon>
        <taxon>Myomorpha</taxon>
        <taxon>Muroidea</taxon>
        <taxon>Muridae</taxon>
        <taxon>Murinae</taxon>
        <taxon>Rattus</taxon>
    </lineage>
</organism>
<dbReference type="EC" id="2.7.1.158"/>
<dbReference type="EMBL" id="AY823319">
    <property type="protein sequence ID" value="AAV76010.1"/>
    <property type="molecule type" value="mRNA"/>
</dbReference>
<dbReference type="RefSeq" id="NP_001008556.1">
    <property type="nucleotide sequence ID" value="NM_001008556.1"/>
</dbReference>
<dbReference type="SMR" id="Q5PXE9"/>
<dbReference type="FunCoup" id="Q5PXE9">
    <property type="interactions" value="2181"/>
</dbReference>
<dbReference type="STRING" id="10116.ENSRNOP00000021022"/>
<dbReference type="PhosphoSitePlus" id="Q5PXE9"/>
<dbReference type="PaxDb" id="10116-ENSRNOP00000021022"/>
<dbReference type="GeneID" id="306808"/>
<dbReference type="KEGG" id="rno:306808"/>
<dbReference type="AGR" id="RGD:1311271"/>
<dbReference type="CTD" id="64768"/>
<dbReference type="RGD" id="1311271">
    <property type="gene designation" value="Ippk"/>
</dbReference>
<dbReference type="eggNOG" id="KOG4749">
    <property type="taxonomic scope" value="Eukaryota"/>
</dbReference>
<dbReference type="InParanoid" id="Q5PXE9"/>
<dbReference type="OrthoDB" id="272370at2759"/>
<dbReference type="PhylomeDB" id="Q5PXE9"/>
<dbReference type="BRENDA" id="2.7.1.158">
    <property type="organism ID" value="5301"/>
</dbReference>
<dbReference type="Reactome" id="R-RNO-1855167">
    <property type="pathway name" value="Synthesis of pyrophosphates in the cytosol"/>
</dbReference>
<dbReference type="Reactome" id="R-RNO-1855191">
    <property type="pathway name" value="Synthesis of IPs in the nucleus"/>
</dbReference>
<dbReference type="PRO" id="PR:Q5PXE9"/>
<dbReference type="Proteomes" id="UP000002494">
    <property type="component" value="Unplaced"/>
</dbReference>
<dbReference type="GO" id="GO:0005737">
    <property type="term" value="C:cytoplasm"/>
    <property type="evidence" value="ECO:0007669"/>
    <property type="project" value="UniProtKB-SubCell"/>
</dbReference>
<dbReference type="GO" id="GO:0005730">
    <property type="term" value="C:nucleolus"/>
    <property type="evidence" value="ECO:0000266"/>
    <property type="project" value="RGD"/>
</dbReference>
<dbReference type="GO" id="GO:0005634">
    <property type="term" value="C:nucleus"/>
    <property type="evidence" value="ECO:0000318"/>
    <property type="project" value="GO_Central"/>
</dbReference>
<dbReference type="GO" id="GO:0005524">
    <property type="term" value="F:ATP binding"/>
    <property type="evidence" value="ECO:0007669"/>
    <property type="project" value="UniProtKB-KW"/>
</dbReference>
<dbReference type="GO" id="GO:0035299">
    <property type="term" value="F:inositol-1,3,4,5,6-pentakisphosphate 2-kinase activity"/>
    <property type="evidence" value="ECO:0000314"/>
    <property type="project" value="UniProtKB"/>
</dbReference>
<dbReference type="GO" id="GO:0060090">
    <property type="term" value="F:molecular adaptor activity"/>
    <property type="evidence" value="ECO:0000266"/>
    <property type="project" value="RGD"/>
</dbReference>
<dbReference type="GO" id="GO:0032958">
    <property type="term" value="P:inositol phosphate biosynthetic process"/>
    <property type="evidence" value="ECO:0000318"/>
    <property type="project" value="GO_Central"/>
</dbReference>
<dbReference type="GO" id="GO:1901838">
    <property type="term" value="P:positive regulation of transcription of nucleolar large rRNA by RNA polymerase I"/>
    <property type="evidence" value="ECO:0000266"/>
    <property type="project" value="RGD"/>
</dbReference>
<dbReference type="FunFam" id="3.30.200.110:FF:000001">
    <property type="entry name" value="Inositol-pentakisphosphate 2-kinase"/>
    <property type="match status" value="1"/>
</dbReference>
<dbReference type="Gene3D" id="3.30.200.110">
    <property type="entry name" value="Inositol-pentakisphosphate 2-kinase, N-lobe"/>
    <property type="match status" value="1"/>
</dbReference>
<dbReference type="InterPro" id="IPR009286">
    <property type="entry name" value="Ins_P5_2-kin"/>
</dbReference>
<dbReference type="InterPro" id="IPR043001">
    <property type="entry name" value="IP5_2-K_N_lobe"/>
</dbReference>
<dbReference type="PANTHER" id="PTHR14456">
    <property type="entry name" value="INOSITOL POLYPHOSPHATE KINASE 1"/>
    <property type="match status" value="1"/>
</dbReference>
<dbReference type="PANTHER" id="PTHR14456:SF2">
    <property type="entry name" value="INOSITOL-PENTAKISPHOSPHATE 2-KINASE"/>
    <property type="match status" value="1"/>
</dbReference>
<dbReference type="Pfam" id="PF06090">
    <property type="entry name" value="Ins_P5_2-kin"/>
    <property type="match status" value="1"/>
</dbReference>